<protein>
    <recommendedName>
        <fullName evidence="1">Probable transcriptional regulatory protein BLA_1344</fullName>
    </recommendedName>
</protein>
<accession>B8DUF0</accession>
<comment type="subcellular location">
    <subcellularLocation>
        <location evidence="1">Cytoplasm</location>
    </subcellularLocation>
</comment>
<comment type="similarity">
    <text evidence="1">Belongs to the TACO1 family.</text>
</comment>
<evidence type="ECO:0000255" key="1">
    <source>
        <dbReference type="HAMAP-Rule" id="MF_00693"/>
    </source>
</evidence>
<sequence>MSGHSKWATTKHKKAAIDAKRGKLFAKLIKNIEIAARQGGGDPDGNPALYDAIYKAKKASMPADNIKRAVARGSGAEAGGANYEEIIYEGYAPAGVGLIIECLTDNRNRAAADVRSTLGKGGGSLATNGAVSFNFERKGEIVVPSEGLDFDDLFEKAAEAGAEDVIDDGDTYTVVTAPSDLITVRQALQDAGVDYDSADLVMRPKNEIELGLDDARKVSKLIDNLDDLDDVQNIYSNWTASDDVLAQLDEE</sequence>
<proteinExistence type="inferred from homology"/>
<feature type="chain" id="PRO_1000200078" description="Probable transcriptional regulatory protein BLA_1344">
    <location>
        <begin position="1"/>
        <end position="251"/>
    </location>
</feature>
<keyword id="KW-0963">Cytoplasm</keyword>
<keyword id="KW-0238">DNA-binding</keyword>
<keyword id="KW-1185">Reference proteome</keyword>
<keyword id="KW-0804">Transcription</keyword>
<keyword id="KW-0805">Transcription regulation</keyword>
<name>Y1344_BIFA0</name>
<reference key="1">
    <citation type="journal article" date="2009" name="J. Bacteriol.">
        <title>Genome sequence of the probiotic bacterium Bifidobacterium animalis subsp. lactis AD011.</title>
        <authorList>
            <person name="Kim J.F."/>
            <person name="Jeong H."/>
            <person name="Yu D.S."/>
            <person name="Choi S.-H."/>
            <person name="Hur C.-G."/>
            <person name="Park M.-S."/>
            <person name="Yoon S.H."/>
            <person name="Kim D.-W."/>
            <person name="Ji G.E."/>
            <person name="Park H.-S."/>
            <person name="Oh T.K."/>
        </authorList>
    </citation>
    <scope>NUCLEOTIDE SEQUENCE [LARGE SCALE GENOMIC DNA]</scope>
    <source>
        <strain>AD011</strain>
    </source>
</reference>
<dbReference type="EMBL" id="CP001213">
    <property type="protein sequence ID" value="ACL29629.1"/>
    <property type="molecule type" value="Genomic_DNA"/>
</dbReference>
<dbReference type="RefSeq" id="WP_004217954.1">
    <property type="nucleotide sequence ID" value="NC_011835.1"/>
</dbReference>
<dbReference type="SMR" id="B8DUF0"/>
<dbReference type="STRING" id="442563.BLA_1344"/>
<dbReference type="KEGG" id="bla:BLA_1344"/>
<dbReference type="HOGENOM" id="CLU_062974_2_2_11"/>
<dbReference type="Proteomes" id="UP000002456">
    <property type="component" value="Chromosome"/>
</dbReference>
<dbReference type="GO" id="GO:0005829">
    <property type="term" value="C:cytosol"/>
    <property type="evidence" value="ECO:0007669"/>
    <property type="project" value="TreeGrafter"/>
</dbReference>
<dbReference type="GO" id="GO:0003677">
    <property type="term" value="F:DNA binding"/>
    <property type="evidence" value="ECO:0007669"/>
    <property type="project" value="UniProtKB-UniRule"/>
</dbReference>
<dbReference type="GO" id="GO:0006355">
    <property type="term" value="P:regulation of DNA-templated transcription"/>
    <property type="evidence" value="ECO:0007669"/>
    <property type="project" value="UniProtKB-UniRule"/>
</dbReference>
<dbReference type="FunFam" id="1.10.10.200:FF:000002">
    <property type="entry name" value="Probable transcriptional regulatory protein CLM62_37755"/>
    <property type="match status" value="1"/>
</dbReference>
<dbReference type="Gene3D" id="1.10.10.200">
    <property type="match status" value="1"/>
</dbReference>
<dbReference type="Gene3D" id="3.30.70.980">
    <property type="match status" value="2"/>
</dbReference>
<dbReference type="HAMAP" id="MF_00693">
    <property type="entry name" value="Transcrip_reg_TACO1"/>
    <property type="match status" value="1"/>
</dbReference>
<dbReference type="InterPro" id="IPR017856">
    <property type="entry name" value="Integrase-like_N"/>
</dbReference>
<dbReference type="InterPro" id="IPR048300">
    <property type="entry name" value="TACO1_YebC-like_2nd/3rd_dom"/>
</dbReference>
<dbReference type="InterPro" id="IPR049083">
    <property type="entry name" value="TACO1_YebC_N"/>
</dbReference>
<dbReference type="InterPro" id="IPR002876">
    <property type="entry name" value="Transcrip_reg_TACO1-like"/>
</dbReference>
<dbReference type="InterPro" id="IPR026564">
    <property type="entry name" value="Transcrip_reg_TACO1-like_dom3"/>
</dbReference>
<dbReference type="InterPro" id="IPR029072">
    <property type="entry name" value="YebC-like"/>
</dbReference>
<dbReference type="NCBIfam" id="NF001030">
    <property type="entry name" value="PRK00110.1"/>
    <property type="match status" value="1"/>
</dbReference>
<dbReference type="NCBIfam" id="NF009044">
    <property type="entry name" value="PRK12378.1"/>
    <property type="match status" value="1"/>
</dbReference>
<dbReference type="NCBIfam" id="TIGR01033">
    <property type="entry name" value="YebC/PmpR family DNA-binding transcriptional regulator"/>
    <property type="match status" value="1"/>
</dbReference>
<dbReference type="PANTHER" id="PTHR12532:SF6">
    <property type="entry name" value="TRANSCRIPTIONAL REGULATORY PROTEIN YEBC-RELATED"/>
    <property type="match status" value="1"/>
</dbReference>
<dbReference type="PANTHER" id="PTHR12532">
    <property type="entry name" value="TRANSLATIONAL ACTIVATOR OF CYTOCHROME C OXIDASE 1"/>
    <property type="match status" value="1"/>
</dbReference>
<dbReference type="Pfam" id="PF20772">
    <property type="entry name" value="TACO1_YebC_N"/>
    <property type="match status" value="1"/>
</dbReference>
<dbReference type="Pfam" id="PF01709">
    <property type="entry name" value="Transcrip_reg"/>
    <property type="match status" value="1"/>
</dbReference>
<dbReference type="SUPFAM" id="SSF75625">
    <property type="entry name" value="YebC-like"/>
    <property type="match status" value="1"/>
</dbReference>
<organism>
    <name type="scientific">Bifidobacterium animalis subsp. lactis (strain AD011)</name>
    <dbReference type="NCBI Taxonomy" id="442563"/>
    <lineage>
        <taxon>Bacteria</taxon>
        <taxon>Bacillati</taxon>
        <taxon>Actinomycetota</taxon>
        <taxon>Actinomycetes</taxon>
        <taxon>Bifidobacteriales</taxon>
        <taxon>Bifidobacteriaceae</taxon>
        <taxon>Bifidobacterium</taxon>
    </lineage>
</organism>
<gene>
    <name type="ordered locus">BLA_1344</name>
</gene>